<evidence type="ECO:0000255" key="1"/>
<evidence type="ECO:0000255" key="2">
    <source>
        <dbReference type="PROSITE-ProRule" id="PRU00297"/>
    </source>
</evidence>
<evidence type="ECO:0000255" key="3">
    <source>
        <dbReference type="PROSITE-ProRule" id="PRU10012"/>
    </source>
</evidence>
<evidence type="ECO:0000269" key="4">
    <source>
    </source>
</evidence>
<evidence type="ECO:0000269" key="5">
    <source ref="7"/>
</evidence>
<evidence type="ECO:0000305" key="6"/>
<accession>Q96511</accession>
<accession>Q8RWL8</accession>
<reference key="1">
    <citation type="submission" date="1996-06" db="EMBL/GenBank/DDBJ databases">
        <title>From expressed sequence tags to structure, function, evolution and expression of 28 ER-targeted Arabidopsis peroxidases.</title>
        <authorList>
            <person name="Welinder K.G."/>
            <person name="Jespersen H.M."/>
            <person name="Kjaersgaard I.V.H."/>
            <person name="Justesen A.F."/>
            <person name="Oestergaard L."/>
            <person name="Abelskov A.K."/>
            <person name="Hansen L.N."/>
            <person name="Rasmussen S.K."/>
        </authorList>
    </citation>
    <scope>NUCLEOTIDE SEQUENCE [MRNA]</scope>
    <source>
        <strain>cv. Columbia</strain>
    </source>
</reference>
<reference key="2">
    <citation type="journal article" date="1997" name="DNA Res.">
        <title>Structural analysis of Arabidopsis thaliana chromosome 5. III. Sequence features of the regions of 1,191,918 bp covered by seventeen physically assigned P1 clones.</title>
        <authorList>
            <person name="Nakamura Y."/>
            <person name="Sato S."/>
            <person name="Kaneko T."/>
            <person name="Kotani H."/>
            <person name="Asamizu E."/>
            <person name="Miyajima N."/>
            <person name="Tabata S."/>
        </authorList>
    </citation>
    <scope>NUCLEOTIDE SEQUENCE [LARGE SCALE GENOMIC DNA]</scope>
    <source>
        <strain>cv. Columbia</strain>
    </source>
</reference>
<reference key="3">
    <citation type="journal article" date="2017" name="Plant J.">
        <title>Araport11: a complete reannotation of the Arabidopsis thaliana reference genome.</title>
        <authorList>
            <person name="Cheng C.Y."/>
            <person name="Krishnakumar V."/>
            <person name="Chan A.P."/>
            <person name="Thibaud-Nissen F."/>
            <person name="Schobel S."/>
            <person name="Town C.D."/>
        </authorList>
    </citation>
    <scope>GENOME REANNOTATION</scope>
    <source>
        <strain>cv. Columbia</strain>
    </source>
</reference>
<reference key="4">
    <citation type="journal article" date="2003" name="Science">
        <title>Empirical analysis of transcriptional activity in the Arabidopsis genome.</title>
        <authorList>
            <person name="Yamada K."/>
            <person name="Lim J."/>
            <person name="Dale J.M."/>
            <person name="Chen H."/>
            <person name="Shinn P."/>
            <person name="Palm C.J."/>
            <person name="Southwick A.M."/>
            <person name="Wu H.C."/>
            <person name="Kim C.J."/>
            <person name="Nguyen M."/>
            <person name="Pham P.K."/>
            <person name="Cheuk R.F."/>
            <person name="Karlin-Newmann G."/>
            <person name="Liu S.X."/>
            <person name="Lam B."/>
            <person name="Sakano H."/>
            <person name="Wu T."/>
            <person name="Yu G."/>
            <person name="Miranda M."/>
            <person name="Quach H.L."/>
            <person name="Tripp M."/>
            <person name="Chang C.H."/>
            <person name="Lee J.M."/>
            <person name="Toriumi M.J."/>
            <person name="Chan M.M."/>
            <person name="Tang C.C."/>
            <person name="Onodera C.S."/>
            <person name="Deng J.M."/>
            <person name="Akiyama K."/>
            <person name="Ansari Y."/>
            <person name="Arakawa T."/>
            <person name="Banh J."/>
            <person name="Banno F."/>
            <person name="Bowser L."/>
            <person name="Brooks S.Y."/>
            <person name="Carninci P."/>
            <person name="Chao Q."/>
            <person name="Choy N."/>
            <person name="Enju A."/>
            <person name="Goldsmith A.D."/>
            <person name="Gurjal M."/>
            <person name="Hansen N.F."/>
            <person name="Hayashizaki Y."/>
            <person name="Johnson-Hopson C."/>
            <person name="Hsuan V.W."/>
            <person name="Iida K."/>
            <person name="Karnes M."/>
            <person name="Khan S."/>
            <person name="Koesema E."/>
            <person name="Ishida J."/>
            <person name="Jiang P.X."/>
            <person name="Jones T."/>
            <person name="Kawai J."/>
            <person name="Kamiya A."/>
            <person name="Meyers C."/>
            <person name="Nakajima M."/>
            <person name="Narusaka M."/>
            <person name="Seki M."/>
            <person name="Sakurai T."/>
            <person name="Satou M."/>
            <person name="Tamse R."/>
            <person name="Vaysberg M."/>
            <person name="Wallender E.K."/>
            <person name="Wong C."/>
            <person name="Yamamura Y."/>
            <person name="Yuan S."/>
            <person name="Shinozaki K."/>
            <person name="Davis R.W."/>
            <person name="Theologis A."/>
            <person name="Ecker J.R."/>
        </authorList>
    </citation>
    <scope>NUCLEOTIDE SEQUENCE [LARGE SCALE MRNA]</scope>
    <source>
        <strain>cv. Columbia</strain>
    </source>
</reference>
<reference key="5">
    <citation type="journal article" date="1998" name="FEBS Lett.">
        <title>Computational analyses and annotations of the Arabidopsis peroxidase gene family.</title>
        <authorList>
            <person name="Oestergaard L."/>
            <person name="Pedersen A.G."/>
            <person name="Jespersen H.M."/>
            <person name="Brunak S."/>
            <person name="Welinder K.G."/>
        </authorList>
    </citation>
    <scope>CHARACTERIZATION</scope>
    <source>
        <strain>cv. Columbia</strain>
    </source>
</reference>
<reference key="6">
    <citation type="journal article" date="1998" name="Plant J.">
        <title>Towards Arabidopsis genome analysis: monitoring expression profiles of 1400 genes using cDNA microarrays.</title>
        <authorList>
            <person name="Ruan Y."/>
            <person name="Gilmore J."/>
            <person name="Conner T."/>
        </authorList>
    </citation>
    <scope>TISSUE SPECIFICITY</scope>
    <source>
        <strain>cv. Columbia</strain>
    </source>
</reference>
<reference key="7">
    <citation type="journal article" date="2001" name="Plant Physiol. Biochem.">
        <title>Toward elucidating the global gene expression patterns of developing Arabidopsis: parallel analysis of 8300 genes by a high-density oligonucleotide probe array.</title>
        <authorList>
            <person name="Zhu T."/>
            <person name="Budworth P."/>
            <person name="Han B."/>
            <person name="Brown D."/>
            <person name="Chang H.-S."/>
            <person name="Zou G."/>
            <person name="Wang X."/>
        </authorList>
    </citation>
    <scope>TISSUE SPECIFICITY</scope>
    <source>
        <strain>cv. Columbia</strain>
    </source>
</reference>
<reference key="8">
    <citation type="journal article" date="2002" name="Gene">
        <title>Analysis and expression of the class III peroxidase large gene family in Arabidopsis thaliana.</title>
        <authorList>
            <person name="Tognolli M."/>
            <person name="Penel C."/>
            <person name="Greppin H."/>
            <person name="Simon P."/>
        </authorList>
    </citation>
    <scope>GENE FAMILY ORGANIZATION</scope>
    <scope>NOMENCLATURE</scope>
    <source>
        <strain>cv. Columbia</strain>
    </source>
</reference>
<feature type="signal peptide" evidence="1">
    <location>
        <begin position="1"/>
        <end position="23"/>
    </location>
</feature>
<feature type="chain" id="PRO_0000023734" description="Peroxidase 69">
    <location>
        <begin position="24"/>
        <end position="331"/>
    </location>
</feature>
<feature type="active site" description="Proton acceptor" evidence="2 3">
    <location>
        <position position="77"/>
    </location>
</feature>
<feature type="binding site" evidence="2">
    <location>
        <position position="78"/>
    </location>
    <ligand>
        <name>Ca(2+)</name>
        <dbReference type="ChEBI" id="CHEBI:29108"/>
        <label>1</label>
    </ligand>
</feature>
<feature type="binding site" evidence="2">
    <location>
        <position position="81"/>
    </location>
    <ligand>
        <name>Ca(2+)</name>
        <dbReference type="ChEBI" id="CHEBI:29108"/>
        <label>1</label>
    </ligand>
</feature>
<feature type="binding site" evidence="2">
    <location>
        <position position="83"/>
    </location>
    <ligand>
        <name>Ca(2+)</name>
        <dbReference type="ChEBI" id="CHEBI:29108"/>
        <label>1</label>
    </ligand>
</feature>
<feature type="binding site" evidence="2">
    <location>
        <position position="85"/>
    </location>
    <ligand>
        <name>Ca(2+)</name>
        <dbReference type="ChEBI" id="CHEBI:29108"/>
        <label>1</label>
    </ligand>
</feature>
<feature type="binding site" evidence="2">
    <location>
        <position position="87"/>
    </location>
    <ligand>
        <name>Ca(2+)</name>
        <dbReference type="ChEBI" id="CHEBI:29108"/>
        <label>1</label>
    </ligand>
</feature>
<feature type="binding site" evidence="2">
    <location>
        <position position="168"/>
    </location>
    <ligand>
        <name>substrate</name>
    </ligand>
</feature>
<feature type="binding site" description="axial binding residue" evidence="2">
    <location>
        <position position="198"/>
    </location>
    <ligand>
        <name>heme b</name>
        <dbReference type="ChEBI" id="CHEBI:60344"/>
    </ligand>
    <ligandPart>
        <name>Fe</name>
        <dbReference type="ChEBI" id="CHEBI:18248"/>
    </ligandPart>
</feature>
<feature type="binding site" evidence="2">
    <location>
        <position position="199"/>
    </location>
    <ligand>
        <name>Ca(2+)</name>
        <dbReference type="ChEBI" id="CHEBI:29108"/>
        <label>2</label>
    </ligand>
</feature>
<feature type="binding site" evidence="2">
    <location>
        <position position="248"/>
    </location>
    <ligand>
        <name>Ca(2+)</name>
        <dbReference type="ChEBI" id="CHEBI:29108"/>
        <label>2</label>
    </ligand>
</feature>
<feature type="binding site" evidence="2">
    <location>
        <position position="251"/>
    </location>
    <ligand>
        <name>Ca(2+)</name>
        <dbReference type="ChEBI" id="CHEBI:29108"/>
        <label>2</label>
    </ligand>
</feature>
<feature type="binding site" evidence="2">
    <location>
        <position position="256"/>
    </location>
    <ligand>
        <name>Ca(2+)</name>
        <dbReference type="ChEBI" id="CHEBI:29108"/>
        <label>2</label>
    </ligand>
</feature>
<feature type="site" description="Transition state stabilizer" evidence="2">
    <location>
        <position position="73"/>
    </location>
</feature>
<feature type="glycosylation site" description="N-linked (GlcNAc...) asparagine" evidence="1">
    <location>
        <position position="93"/>
    </location>
</feature>
<feature type="glycosylation site" description="N-linked (GlcNAc...) asparagine" evidence="1">
    <location>
        <position position="216"/>
    </location>
</feature>
<feature type="disulfide bond" evidence="2">
    <location>
        <begin position="46"/>
        <end position="122"/>
    </location>
</feature>
<feature type="disulfide bond" evidence="2">
    <location>
        <begin position="79"/>
        <end position="84"/>
    </location>
</feature>
<feature type="disulfide bond" evidence="2">
    <location>
        <begin position="128"/>
        <end position="327"/>
    </location>
</feature>
<feature type="disulfide bond" evidence="2">
    <location>
        <begin position="205"/>
        <end position="237"/>
    </location>
</feature>
<keyword id="KW-0106">Calcium</keyword>
<keyword id="KW-1015">Disulfide bond</keyword>
<keyword id="KW-0325">Glycoprotein</keyword>
<keyword id="KW-0349">Heme</keyword>
<keyword id="KW-0376">Hydrogen peroxide</keyword>
<keyword id="KW-0408">Iron</keyword>
<keyword id="KW-0479">Metal-binding</keyword>
<keyword id="KW-0560">Oxidoreductase</keyword>
<keyword id="KW-0575">Peroxidase</keyword>
<keyword id="KW-1185">Reference proteome</keyword>
<keyword id="KW-0964">Secreted</keyword>
<keyword id="KW-0732">Signal</keyword>
<proteinExistence type="evidence at protein level"/>
<organism>
    <name type="scientific">Arabidopsis thaliana</name>
    <name type="common">Mouse-ear cress</name>
    <dbReference type="NCBI Taxonomy" id="3702"/>
    <lineage>
        <taxon>Eukaryota</taxon>
        <taxon>Viridiplantae</taxon>
        <taxon>Streptophyta</taxon>
        <taxon>Embryophyta</taxon>
        <taxon>Tracheophyta</taxon>
        <taxon>Spermatophyta</taxon>
        <taxon>Magnoliopsida</taxon>
        <taxon>eudicotyledons</taxon>
        <taxon>Gunneridae</taxon>
        <taxon>Pentapetalae</taxon>
        <taxon>rosids</taxon>
        <taxon>malvids</taxon>
        <taxon>Brassicales</taxon>
        <taxon>Brassicaceae</taxon>
        <taxon>Camelineae</taxon>
        <taxon>Arabidopsis</taxon>
    </lineage>
</organism>
<dbReference type="EC" id="1.11.1.7"/>
<dbReference type="EMBL" id="X98808">
    <property type="protein sequence ID" value="CAA67340.1"/>
    <property type="molecule type" value="mRNA"/>
</dbReference>
<dbReference type="EMBL" id="AB008266">
    <property type="protein sequence ID" value="BAB10278.1"/>
    <property type="molecule type" value="Genomic_DNA"/>
</dbReference>
<dbReference type="EMBL" id="CP002688">
    <property type="protein sequence ID" value="AED97840.1"/>
    <property type="molecule type" value="Genomic_DNA"/>
</dbReference>
<dbReference type="EMBL" id="AY093012">
    <property type="protein sequence ID" value="AAM13011.1"/>
    <property type="status" value="ALT_SEQ"/>
    <property type="molecule type" value="mRNA"/>
</dbReference>
<dbReference type="RefSeq" id="NP_201215.1">
    <property type="nucleotide sequence ID" value="NM_125806.3"/>
</dbReference>
<dbReference type="SMR" id="Q96511"/>
<dbReference type="FunCoup" id="Q96511">
    <property type="interactions" value="127"/>
</dbReference>
<dbReference type="STRING" id="3702.Q96511"/>
<dbReference type="PeroxiBase" id="235">
    <property type="entry name" value="AtPrx69"/>
</dbReference>
<dbReference type="GlyCosmos" id="Q96511">
    <property type="glycosylation" value="2 sites, No reported glycans"/>
</dbReference>
<dbReference type="GlyGen" id="Q96511">
    <property type="glycosylation" value="2 sites"/>
</dbReference>
<dbReference type="iPTMnet" id="Q96511"/>
<dbReference type="PaxDb" id="3702-AT5G64100.1"/>
<dbReference type="ProteomicsDB" id="236456"/>
<dbReference type="EnsemblPlants" id="AT5G64100.1">
    <property type="protein sequence ID" value="AT5G64100.1"/>
    <property type="gene ID" value="AT5G64100"/>
</dbReference>
<dbReference type="GeneID" id="836531"/>
<dbReference type="Gramene" id="AT5G64100.1">
    <property type="protein sequence ID" value="AT5G64100.1"/>
    <property type="gene ID" value="AT5G64100"/>
</dbReference>
<dbReference type="KEGG" id="ath:AT5G64100"/>
<dbReference type="Araport" id="AT5G64100"/>
<dbReference type="TAIR" id="AT5G64100"/>
<dbReference type="eggNOG" id="ENOG502QQ2G">
    <property type="taxonomic scope" value="Eukaryota"/>
</dbReference>
<dbReference type="HOGENOM" id="CLU_010543_0_3_1"/>
<dbReference type="InParanoid" id="Q96511"/>
<dbReference type="OMA" id="HVGFYGN"/>
<dbReference type="OrthoDB" id="2113341at2759"/>
<dbReference type="PhylomeDB" id="Q96511"/>
<dbReference type="BioCyc" id="ARA:AT5G64100-MONOMER"/>
<dbReference type="PRO" id="PR:Q96511"/>
<dbReference type="Proteomes" id="UP000006548">
    <property type="component" value="Chromosome 5"/>
</dbReference>
<dbReference type="ExpressionAtlas" id="Q96511">
    <property type="expression patterns" value="baseline and differential"/>
</dbReference>
<dbReference type="GO" id="GO:0005576">
    <property type="term" value="C:extracellular region"/>
    <property type="evidence" value="ECO:0007669"/>
    <property type="project" value="UniProtKB-SubCell"/>
</dbReference>
<dbReference type="GO" id="GO:0005886">
    <property type="term" value="C:plasma membrane"/>
    <property type="evidence" value="ECO:0007005"/>
    <property type="project" value="TAIR"/>
</dbReference>
<dbReference type="GO" id="GO:0009506">
    <property type="term" value="C:plasmodesma"/>
    <property type="evidence" value="ECO:0007005"/>
    <property type="project" value="TAIR"/>
</dbReference>
<dbReference type="GO" id="GO:0020037">
    <property type="term" value="F:heme binding"/>
    <property type="evidence" value="ECO:0007669"/>
    <property type="project" value="InterPro"/>
</dbReference>
<dbReference type="GO" id="GO:0140825">
    <property type="term" value="F:lactoperoxidase activity"/>
    <property type="evidence" value="ECO:0007669"/>
    <property type="project" value="UniProtKB-EC"/>
</dbReference>
<dbReference type="GO" id="GO:0046872">
    <property type="term" value="F:metal ion binding"/>
    <property type="evidence" value="ECO:0007669"/>
    <property type="project" value="UniProtKB-KW"/>
</dbReference>
<dbReference type="GO" id="GO:0003729">
    <property type="term" value="F:mRNA binding"/>
    <property type="evidence" value="ECO:0007005"/>
    <property type="project" value="TAIR"/>
</dbReference>
<dbReference type="GO" id="GO:0004601">
    <property type="term" value="F:peroxidase activity"/>
    <property type="evidence" value="ECO:0000314"/>
    <property type="project" value="TAIR"/>
</dbReference>
<dbReference type="GO" id="GO:0042744">
    <property type="term" value="P:hydrogen peroxide catabolic process"/>
    <property type="evidence" value="ECO:0007669"/>
    <property type="project" value="UniProtKB-KW"/>
</dbReference>
<dbReference type="GO" id="GO:0006979">
    <property type="term" value="P:response to oxidative stress"/>
    <property type="evidence" value="ECO:0007669"/>
    <property type="project" value="InterPro"/>
</dbReference>
<dbReference type="CDD" id="cd00693">
    <property type="entry name" value="secretory_peroxidase"/>
    <property type="match status" value="1"/>
</dbReference>
<dbReference type="FunFam" id="1.10.420.10:FF:000010">
    <property type="entry name" value="Peroxidase"/>
    <property type="match status" value="1"/>
</dbReference>
<dbReference type="FunFam" id="1.10.520.10:FF:000008">
    <property type="entry name" value="Peroxidase"/>
    <property type="match status" value="1"/>
</dbReference>
<dbReference type="Gene3D" id="1.10.520.10">
    <property type="match status" value="1"/>
</dbReference>
<dbReference type="Gene3D" id="1.10.420.10">
    <property type="entry name" value="Peroxidase, domain 2"/>
    <property type="match status" value="1"/>
</dbReference>
<dbReference type="InterPro" id="IPR002016">
    <property type="entry name" value="Haem_peroxidase"/>
</dbReference>
<dbReference type="InterPro" id="IPR010255">
    <property type="entry name" value="Haem_peroxidase_sf"/>
</dbReference>
<dbReference type="InterPro" id="IPR000823">
    <property type="entry name" value="Peroxidase_pln"/>
</dbReference>
<dbReference type="InterPro" id="IPR019794">
    <property type="entry name" value="Peroxidases_AS"/>
</dbReference>
<dbReference type="InterPro" id="IPR019793">
    <property type="entry name" value="Peroxidases_heam-ligand_BS"/>
</dbReference>
<dbReference type="InterPro" id="IPR033905">
    <property type="entry name" value="Secretory_peroxidase"/>
</dbReference>
<dbReference type="PANTHER" id="PTHR31235">
    <property type="entry name" value="PEROXIDASE 25-RELATED"/>
    <property type="match status" value="1"/>
</dbReference>
<dbReference type="Pfam" id="PF00141">
    <property type="entry name" value="peroxidase"/>
    <property type="match status" value="1"/>
</dbReference>
<dbReference type="PRINTS" id="PR00458">
    <property type="entry name" value="PEROXIDASE"/>
</dbReference>
<dbReference type="PRINTS" id="PR00461">
    <property type="entry name" value="PLPEROXIDASE"/>
</dbReference>
<dbReference type="SUPFAM" id="SSF48113">
    <property type="entry name" value="Heme-dependent peroxidases"/>
    <property type="match status" value="1"/>
</dbReference>
<dbReference type="PROSITE" id="PS00435">
    <property type="entry name" value="PEROXIDASE_1"/>
    <property type="match status" value="1"/>
</dbReference>
<dbReference type="PROSITE" id="PS00436">
    <property type="entry name" value="PEROXIDASE_2"/>
    <property type="match status" value="1"/>
</dbReference>
<dbReference type="PROSITE" id="PS50873">
    <property type="entry name" value="PEROXIDASE_4"/>
    <property type="match status" value="1"/>
</dbReference>
<protein>
    <recommendedName>
        <fullName>Peroxidase 69</fullName>
        <shortName>Atperox P69</shortName>
        <ecNumber>1.11.1.7</ecNumber>
    </recommendedName>
    <alternativeName>
        <fullName>ATP3a</fullName>
    </alternativeName>
</protein>
<comment type="function">
    <text>Removal of H(2)O(2), oxidation of toxic reductants, biosynthesis and degradation of lignin, suberization, auxin catabolism, response to environmental stresses such as wounding, pathogen attack and oxidative stress. These functions might be dependent on each isozyme/isoform in each plant tissue.</text>
</comment>
<comment type="catalytic activity">
    <reaction>
        <text>2 a phenolic donor + H2O2 = 2 a phenolic radical donor + 2 H2O</text>
        <dbReference type="Rhea" id="RHEA:56136"/>
        <dbReference type="ChEBI" id="CHEBI:15377"/>
        <dbReference type="ChEBI" id="CHEBI:16240"/>
        <dbReference type="ChEBI" id="CHEBI:139520"/>
        <dbReference type="ChEBI" id="CHEBI:139521"/>
        <dbReference type="EC" id="1.11.1.7"/>
    </reaction>
</comment>
<comment type="cofactor">
    <cofactor evidence="2">
        <name>heme b</name>
        <dbReference type="ChEBI" id="CHEBI:60344"/>
    </cofactor>
    <text evidence="2">Binds 1 heme b (iron(II)-protoporphyrin IX) group per subunit.</text>
</comment>
<comment type="cofactor">
    <cofactor evidence="2">
        <name>Ca(2+)</name>
        <dbReference type="ChEBI" id="CHEBI:29108"/>
    </cofactor>
    <text evidence="2">Binds 2 calcium ions per subunit.</text>
</comment>
<comment type="subcellular location">
    <subcellularLocation>
        <location evidence="2">Secreted</location>
    </subcellularLocation>
</comment>
<comment type="tissue specificity">
    <text evidence="4 5">Mainly expressed in roots and slightly in leaves.</text>
</comment>
<comment type="miscellaneous">
    <text>There are 73 peroxidase genes in A.thaliana.</text>
</comment>
<comment type="similarity">
    <text evidence="2">Belongs to the peroxidase family. Classical plant (class III) peroxidase subfamily.</text>
</comment>
<comment type="sequence caution" evidence="6">
    <conflict type="erroneous termination">
        <sequence resource="EMBL-CDS" id="AAM13011"/>
    </conflict>
    <text>Truncated C-terminus.</text>
</comment>
<gene>
    <name type="primary">PER69</name>
    <name type="synonym">P69</name>
    <name type="ordered locus">At5g64100</name>
    <name type="ORF">MHJ24.8</name>
</gene>
<name>PER69_ARATH</name>
<sequence length="331" mass="35679">MGRGYNLLFVLVTFLVLVAAVTAQGNRGSNSGGGRRPHVGFYGNRCRNVESIVRSVVQSHVRSIPANAPGILRMHFHDCFVHGCDGSVLLAGNTSERTAVPNRSLRGFEVIEEAKARLEKACPRTVSCADILTLAARDAVVLTGGQRWEVPLGRLDGRISQASDVNLPGPSDSVAKQKQDFAAKTLNTLDLVTLVGGHTIGTAGCGLVRGRFVNFNGTGQPDPSIDPSFVPLILAQCPQNGGTRVELDEGSVDKFDTSFLRKVTSSRVVLQSDLVLWKDPETRAIIERLLGLRRPSLRFGTEFGKSMVKMSLIEVKTGSDGEIRRVCSAIN</sequence>